<sequence length="293" mass="32337">MPELPEVETVRRGLQPAMEGATIVRAETRRKDLRFPFQTDFVARLEGQAVTGLGRRAKYLLADLASGDVLLMHLGMSGSFRVIDAAGVTVPGDFHRPRGEDRVHDHVRFTMSSRAEIVFNDPRRFGYMKIVARSALGDEPLLKGLGPEPLGNEFDAAVLAHGCRNRKTSLKAALLDQRVVAGLGNIYVCEALFRARLSPRRLAATLAMKTGAPSERAERLVGAIRDVLNQAIEAGGSSLRDHRQTTGELGYFQHSFQVYDREGDKCRTPACKGAVKRFTQNGRSTFWCPVCQT</sequence>
<name>FPG_NITWN</name>
<protein>
    <recommendedName>
        <fullName evidence="2">Formamidopyrimidine-DNA glycosylase</fullName>
        <shortName evidence="2">Fapy-DNA glycosylase</shortName>
        <ecNumber evidence="2">3.2.2.23</ecNumber>
    </recommendedName>
    <alternativeName>
        <fullName evidence="2">DNA-(apurinic or apyrimidinic site) lyase MutM</fullName>
        <shortName evidence="2">AP lyase MutM</shortName>
        <ecNumber evidence="2">4.2.99.18</ecNumber>
    </alternativeName>
</protein>
<keyword id="KW-0227">DNA damage</keyword>
<keyword id="KW-0234">DNA repair</keyword>
<keyword id="KW-0238">DNA-binding</keyword>
<keyword id="KW-0326">Glycosidase</keyword>
<keyword id="KW-0378">Hydrolase</keyword>
<keyword id="KW-0456">Lyase</keyword>
<keyword id="KW-0479">Metal-binding</keyword>
<keyword id="KW-0511">Multifunctional enzyme</keyword>
<keyword id="KW-1185">Reference proteome</keyword>
<keyword id="KW-0862">Zinc</keyword>
<keyword id="KW-0863">Zinc-finger</keyword>
<dbReference type="EC" id="3.2.2.23" evidence="2"/>
<dbReference type="EC" id="4.2.99.18" evidence="2"/>
<dbReference type="EMBL" id="CP000115">
    <property type="protein sequence ID" value="ABA03308.1"/>
    <property type="molecule type" value="Genomic_DNA"/>
</dbReference>
<dbReference type="RefSeq" id="WP_011313379.1">
    <property type="nucleotide sequence ID" value="NC_007406.1"/>
</dbReference>
<dbReference type="SMR" id="Q3SWN3"/>
<dbReference type="STRING" id="323098.Nwi_0040"/>
<dbReference type="KEGG" id="nwi:Nwi_0040"/>
<dbReference type="eggNOG" id="COG0266">
    <property type="taxonomic scope" value="Bacteria"/>
</dbReference>
<dbReference type="HOGENOM" id="CLU_038423_1_1_5"/>
<dbReference type="OrthoDB" id="9800855at2"/>
<dbReference type="Proteomes" id="UP000002531">
    <property type="component" value="Chromosome"/>
</dbReference>
<dbReference type="GO" id="GO:0034039">
    <property type="term" value="F:8-oxo-7,8-dihydroguanine DNA N-glycosylase activity"/>
    <property type="evidence" value="ECO:0007669"/>
    <property type="project" value="TreeGrafter"/>
</dbReference>
<dbReference type="GO" id="GO:0140078">
    <property type="term" value="F:class I DNA-(apurinic or apyrimidinic site) endonuclease activity"/>
    <property type="evidence" value="ECO:0007669"/>
    <property type="project" value="UniProtKB-EC"/>
</dbReference>
<dbReference type="GO" id="GO:0003684">
    <property type="term" value="F:damaged DNA binding"/>
    <property type="evidence" value="ECO:0007669"/>
    <property type="project" value="InterPro"/>
</dbReference>
<dbReference type="GO" id="GO:0008270">
    <property type="term" value="F:zinc ion binding"/>
    <property type="evidence" value="ECO:0007669"/>
    <property type="project" value="UniProtKB-UniRule"/>
</dbReference>
<dbReference type="GO" id="GO:0006284">
    <property type="term" value="P:base-excision repair"/>
    <property type="evidence" value="ECO:0007669"/>
    <property type="project" value="InterPro"/>
</dbReference>
<dbReference type="CDD" id="cd08966">
    <property type="entry name" value="EcFpg-like_N"/>
    <property type="match status" value="1"/>
</dbReference>
<dbReference type="FunFam" id="1.10.8.50:FF:000003">
    <property type="entry name" value="Formamidopyrimidine-DNA glycosylase"/>
    <property type="match status" value="1"/>
</dbReference>
<dbReference type="FunFam" id="3.20.190.10:FF:000001">
    <property type="entry name" value="Formamidopyrimidine-DNA glycosylase"/>
    <property type="match status" value="1"/>
</dbReference>
<dbReference type="Gene3D" id="1.10.8.50">
    <property type="match status" value="1"/>
</dbReference>
<dbReference type="Gene3D" id="3.20.190.10">
    <property type="entry name" value="MutM-like, N-terminal"/>
    <property type="match status" value="1"/>
</dbReference>
<dbReference type="HAMAP" id="MF_00103">
    <property type="entry name" value="Fapy_DNA_glycosyl"/>
    <property type="match status" value="1"/>
</dbReference>
<dbReference type="InterPro" id="IPR015886">
    <property type="entry name" value="DNA_glyclase/AP_lyase_DNA-bd"/>
</dbReference>
<dbReference type="InterPro" id="IPR015887">
    <property type="entry name" value="DNA_glyclase_Znf_dom_DNA_BS"/>
</dbReference>
<dbReference type="InterPro" id="IPR020629">
    <property type="entry name" value="Formamido-pyr_DNA_Glyclase"/>
</dbReference>
<dbReference type="InterPro" id="IPR012319">
    <property type="entry name" value="FPG_cat"/>
</dbReference>
<dbReference type="InterPro" id="IPR035937">
    <property type="entry name" value="MutM-like_N-ter"/>
</dbReference>
<dbReference type="InterPro" id="IPR010979">
    <property type="entry name" value="Ribosomal_uS13-like_H2TH"/>
</dbReference>
<dbReference type="InterPro" id="IPR000214">
    <property type="entry name" value="Znf_DNA_glyclase/AP_lyase"/>
</dbReference>
<dbReference type="NCBIfam" id="TIGR00577">
    <property type="entry name" value="fpg"/>
    <property type="match status" value="1"/>
</dbReference>
<dbReference type="NCBIfam" id="NF002211">
    <property type="entry name" value="PRK01103.1"/>
    <property type="match status" value="1"/>
</dbReference>
<dbReference type="PANTHER" id="PTHR22993">
    <property type="entry name" value="FORMAMIDOPYRIMIDINE-DNA GLYCOSYLASE"/>
    <property type="match status" value="1"/>
</dbReference>
<dbReference type="PANTHER" id="PTHR22993:SF9">
    <property type="entry name" value="FORMAMIDOPYRIMIDINE-DNA GLYCOSYLASE"/>
    <property type="match status" value="1"/>
</dbReference>
<dbReference type="Pfam" id="PF01149">
    <property type="entry name" value="Fapy_DNA_glyco"/>
    <property type="match status" value="1"/>
</dbReference>
<dbReference type="Pfam" id="PF06831">
    <property type="entry name" value="H2TH"/>
    <property type="match status" value="1"/>
</dbReference>
<dbReference type="SMART" id="SM00898">
    <property type="entry name" value="Fapy_DNA_glyco"/>
    <property type="match status" value="1"/>
</dbReference>
<dbReference type="SMART" id="SM01232">
    <property type="entry name" value="H2TH"/>
    <property type="match status" value="1"/>
</dbReference>
<dbReference type="SUPFAM" id="SSF57716">
    <property type="entry name" value="Glucocorticoid receptor-like (DNA-binding domain)"/>
    <property type="match status" value="1"/>
</dbReference>
<dbReference type="SUPFAM" id="SSF81624">
    <property type="entry name" value="N-terminal domain of MutM-like DNA repair proteins"/>
    <property type="match status" value="1"/>
</dbReference>
<dbReference type="SUPFAM" id="SSF46946">
    <property type="entry name" value="S13-like H2TH domain"/>
    <property type="match status" value="1"/>
</dbReference>
<dbReference type="PROSITE" id="PS51068">
    <property type="entry name" value="FPG_CAT"/>
    <property type="match status" value="1"/>
</dbReference>
<dbReference type="PROSITE" id="PS01242">
    <property type="entry name" value="ZF_FPG_1"/>
    <property type="match status" value="1"/>
</dbReference>
<dbReference type="PROSITE" id="PS51066">
    <property type="entry name" value="ZF_FPG_2"/>
    <property type="match status" value="1"/>
</dbReference>
<evidence type="ECO:0000250" key="1"/>
<evidence type="ECO:0000255" key="2">
    <source>
        <dbReference type="HAMAP-Rule" id="MF_00103"/>
    </source>
</evidence>
<comment type="function">
    <text evidence="2">Involved in base excision repair of DNA damaged by oxidation or by mutagenic agents. Acts as a DNA glycosylase that recognizes and removes damaged bases. Has a preference for oxidized purines, such as 7,8-dihydro-8-oxoguanine (8-oxoG). Has AP (apurinic/apyrimidinic) lyase activity and introduces nicks in the DNA strand. Cleaves the DNA backbone by beta-delta elimination to generate a single-strand break at the site of the removed base with both 3'- and 5'-phosphates.</text>
</comment>
<comment type="catalytic activity">
    <reaction evidence="2">
        <text>Hydrolysis of DNA containing ring-opened 7-methylguanine residues, releasing 2,6-diamino-4-hydroxy-5-(N-methyl)formamidopyrimidine.</text>
        <dbReference type="EC" id="3.2.2.23"/>
    </reaction>
</comment>
<comment type="catalytic activity">
    <reaction evidence="2">
        <text>2'-deoxyribonucleotide-(2'-deoxyribose 5'-phosphate)-2'-deoxyribonucleotide-DNA = a 3'-end 2'-deoxyribonucleotide-(2,3-dehydro-2,3-deoxyribose 5'-phosphate)-DNA + a 5'-end 5'-phospho-2'-deoxyribonucleoside-DNA + H(+)</text>
        <dbReference type="Rhea" id="RHEA:66592"/>
        <dbReference type="Rhea" id="RHEA-COMP:13180"/>
        <dbReference type="Rhea" id="RHEA-COMP:16897"/>
        <dbReference type="Rhea" id="RHEA-COMP:17067"/>
        <dbReference type="ChEBI" id="CHEBI:15378"/>
        <dbReference type="ChEBI" id="CHEBI:136412"/>
        <dbReference type="ChEBI" id="CHEBI:157695"/>
        <dbReference type="ChEBI" id="CHEBI:167181"/>
        <dbReference type="EC" id="4.2.99.18"/>
    </reaction>
</comment>
<comment type="cofactor">
    <cofactor evidence="2">
        <name>Zn(2+)</name>
        <dbReference type="ChEBI" id="CHEBI:29105"/>
    </cofactor>
    <text evidence="2">Binds 1 zinc ion per subunit.</text>
</comment>
<comment type="subunit">
    <text evidence="2">Monomer.</text>
</comment>
<comment type="similarity">
    <text evidence="2">Belongs to the FPG family.</text>
</comment>
<gene>
    <name evidence="2" type="primary">mutM</name>
    <name evidence="2" type="synonym">fpg</name>
    <name type="ordered locus">Nwi_0040</name>
</gene>
<accession>Q3SWN3</accession>
<organism>
    <name type="scientific">Nitrobacter winogradskyi (strain ATCC 25391 / DSM 10237 / CIP 104748 / NCIMB 11846 / Nb-255)</name>
    <dbReference type="NCBI Taxonomy" id="323098"/>
    <lineage>
        <taxon>Bacteria</taxon>
        <taxon>Pseudomonadati</taxon>
        <taxon>Pseudomonadota</taxon>
        <taxon>Alphaproteobacteria</taxon>
        <taxon>Hyphomicrobiales</taxon>
        <taxon>Nitrobacteraceae</taxon>
        <taxon>Nitrobacter</taxon>
    </lineage>
</organism>
<reference key="1">
    <citation type="journal article" date="2006" name="Appl. Environ. Microbiol.">
        <title>Genome sequence of the chemolithoautotrophic nitrite-oxidizing bacterium Nitrobacter winogradskyi Nb-255.</title>
        <authorList>
            <person name="Starkenburg S.R."/>
            <person name="Chain P.S.G."/>
            <person name="Sayavedra-Soto L.A."/>
            <person name="Hauser L."/>
            <person name="Land M.L."/>
            <person name="Larimer F.W."/>
            <person name="Malfatti S.A."/>
            <person name="Klotz M.G."/>
            <person name="Bottomley P.J."/>
            <person name="Arp D.J."/>
            <person name="Hickey W.J."/>
        </authorList>
    </citation>
    <scope>NUCLEOTIDE SEQUENCE [LARGE SCALE GENOMIC DNA]</scope>
    <source>
        <strain>ATCC 25391 / DSM 10237 / CIP 104748 / NCIMB 11846 / Nb-255</strain>
    </source>
</reference>
<feature type="initiator methionine" description="Removed" evidence="1">
    <location>
        <position position="1"/>
    </location>
</feature>
<feature type="chain" id="PRO_0000228451" description="Formamidopyrimidine-DNA glycosylase">
    <location>
        <begin position="2"/>
        <end position="293"/>
    </location>
</feature>
<feature type="zinc finger region" description="FPG-type" evidence="2">
    <location>
        <begin position="257"/>
        <end position="293"/>
    </location>
</feature>
<feature type="active site" description="Schiff-base intermediate with DNA" evidence="2">
    <location>
        <position position="2"/>
    </location>
</feature>
<feature type="active site" description="Proton donor" evidence="2">
    <location>
        <position position="3"/>
    </location>
</feature>
<feature type="active site" description="Proton donor; for beta-elimination activity" evidence="2">
    <location>
        <position position="58"/>
    </location>
</feature>
<feature type="active site" description="Proton donor; for delta-elimination activity" evidence="2">
    <location>
        <position position="283"/>
    </location>
</feature>
<feature type="binding site" evidence="2">
    <location>
        <position position="104"/>
    </location>
    <ligand>
        <name>DNA</name>
        <dbReference type="ChEBI" id="CHEBI:16991"/>
    </ligand>
</feature>
<feature type="binding site" evidence="2">
    <location>
        <position position="123"/>
    </location>
    <ligand>
        <name>DNA</name>
        <dbReference type="ChEBI" id="CHEBI:16991"/>
    </ligand>
</feature>
<feature type="binding site" evidence="2">
    <location>
        <position position="166"/>
    </location>
    <ligand>
        <name>DNA</name>
        <dbReference type="ChEBI" id="CHEBI:16991"/>
    </ligand>
</feature>
<proteinExistence type="inferred from homology"/>